<organism>
    <name type="scientific">Leifsonia xyli subsp. xyli (strain CTCB07)</name>
    <dbReference type="NCBI Taxonomy" id="281090"/>
    <lineage>
        <taxon>Bacteria</taxon>
        <taxon>Bacillati</taxon>
        <taxon>Actinomycetota</taxon>
        <taxon>Actinomycetes</taxon>
        <taxon>Micrococcales</taxon>
        <taxon>Microbacteriaceae</taxon>
        <taxon>Leifsonia</taxon>
    </lineage>
</organism>
<accession>Q6AF73</accession>
<reference key="1">
    <citation type="journal article" date="2004" name="Mol. Plant Microbe Interact.">
        <title>The genome sequence of the Gram-positive sugarcane pathogen Leifsonia xyli subsp. xyli.</title>
        <authorList>
            <person name="Monteiro-Vitorello C.B."/>
            <person name="Camargo L.E.A."/>
            <person name="Van Sluys M.A."/>
            <person name="Kitajima J.P."/>
            <person name="Truffi D."/>
            <person name="do Amaral A.M."/>
            <person name="Harakava R."/>
            <person name="de Oliveira J.C.F."/>
            <person name="Wood D."/>
            <person name="de Oliveira M.C."/>
            <person name="Miyaki C.Y."/>
            <person name="Takita M.A."/>
            <person name="da Silva A.C.R."/>
            <person name="Furlan L.R."/>
            <person name="Carraro D.M."/>
            <person name="Camarotte G."/>
            <person name="Almeida N.F. Jr."/>
            <person name="Carrer H."/>
            <person name="Coutinho L.L."/>
            <person name="El-Dorry H.A."/>
            <person name="Ferro M.I.T."/>
            <person name="Gagliardi P.R."/>
            <person name="Giglioti E."/>
            <person name="Goldman M.H.S."/>
            <person name="Goldman G.H."/>
            <person name="Kimura E.T."/>
            <person name="Ferro E.S."/>
            <person name="Kuramae E.E."/>
            <person name="Lemos E.G.M."/>
            <person name="Lemos M.V.F."/>
            <person name="Mauro S.M.Z."/>
            <person name="Machado M.A."/>
            <person name="Marino C.L."/>
            <person name="Menck C.F."/>
            <person name="Nunes L.R."/>
            <person name="Oliveira R.C."/>
            <person name="Pereira G.G."/>
            <person name="Siqueira W."/>
            <person name="de Souza A.A."/>
            <person name="Tsai S.M."/>
            <person name="Zanca A.S."/>
            <person name="Simpson A.J.G."/>
            <person name="Brumbley S.M."/>
            <person name="Setubal J.C."/>
        </authorList>
    </citation>
    <scope>NUCLEOTIDE SEQUENCE [LARGE SCALE GENOMIC DNA]</scope>
    <source>
        <strain>CTCB07</strain>
    </source>
</reference>
<protein>
    <recommendedName>
        <fullName evidence="1">Imidazole glycerol phosphate synthase subunit HisF</fullName>
        <ecNumber evidence="1">4.3.2.10</ecNumber>
    </recommendedName>
    <alternativeName>
        <fullName evidence="1">IGP synthase cyclase subunit</fullName>
    </alternativeName>
    <alternativeName>
        <fullName evidence="1">IGP synthase subunit HisF</fullName>
    </alternativeName>
    <alternativeName>
        <fullName evidence="1">ImGP synthase subunit HisF</fullName>
        <shortName evidence="1">IGPS subunit HisF</shortName>
    </alternativeName>
</protein>
<dbReference type="EC" id="4.3.2.10" evidence="1"/>
<dbReference type="EMBL" id="AE016822">
    <property type="protein sequence ID" value="AAT88972.1"/>
    <property type="molecule type" value="Genomic_DNA"/>
</dbReference>
<dbReference type="RefSeq" id="WP_011185968.1">
    <property type="nucleotide sequence ID" value="NC_006087.1"/>
</dbReference>
<dbReference type="SMR" id="Q6AF73"/>
<dbReference type="STRING" id="281090.Lxx11230"/>
<dbReference type="KEGG" id="lxx:Lxx11230"/>
<dbReference type="eggNOG" id="COG0107">
    <property type="taxonomic scope" value="Bacteria"/>
</dbReference>
<dbReference type="HOGENOM" id="CLU_048577_4_0_11"/>
<dbReference type="UniPathway" id="UPA00031">
    <property type="reaction ID" value="UER00010"/>
</dbReference>
<dbReference type="Proteomes" id="UP000001306">
    <property type="component" value="Chromosome"/>
</dbReference>
<dbReference type="GO" id="GO:0005737">
    <property type="term" value="C:cytoplasm"/>
    <property type="evidence" value="ECO:0007669"/>
    <property type="project" value="UniProtKB-SubCell"/>
</dbReference>
<dbReference type="GO" id="GO:0000107">
    <property type="term" value="F:imidazoleglycerol-phosphate synthase activity"/>
    <property type="evidence" value="ECO:0007669"/>
    <property type="project" value="UniProtKB-UniRule"/>
</dbReference>
<dbReference type="GO" id="GO:0016829">
    <property type="term" value="F:lyase activity"/>
    <property type="evidence" value="ECO:0007669"/>
    <property type="project" value="UniProtKB-KW"/>
</dbReference>
<dbReference type="GO" id="GO:0000105">
    <property type="term" value="P:L-histidine biosynthetic process"/>
    <property type="evidence" value="ECO:0007669"/>
    <property type="project" value="UniProtKB-UniRule"/>
</dbReference>
<dbReference type="CDD" id="cd04731">
    <property type="entry name" value="HisF"/>
    <property type="match status" value="1"/>
</dbReference>
<dbReference type="FunFam" id="3.20.20.70:FF:000006">
    <property type="entry name" value="Imidazole glycerol phosphate synthase subunit HisF"/>
    <property type="match status" value="1"/>
</dbReference>
<dbReference type="Gene3D" id="3.20.20.70">
    <property type="entry name" value="Aldolase class I"/>
    <property type="match status" value="1"/>
</dbReference>
<dbReference type="HAMAP" id="MF_01013">
    <property type="entry name" value="HisF"/>
    <property type="match status" value="1"/>
</dbReference>
<dbReference type="InterPro" id="IPR013785">
    <property type="entry name" value="Aldolase_TIM"/>
</dbReference>
<dbReference type="InterPro" id="IPR006062">
    <property type="entry name" value="His_biosynth"/>
</dbReference>
<dbReference type="InterPro" id="IPR004651">
    <property type="entry name" value="HisF"/>
</dbReference>
<dbReference type="InterPro" id="IPR050064">
    <property type="entry name" value="IGPS_HisA/HisF"/>
</dbReference>
<dbReference type="InterPro" id="IPR011060">
    <property type="entry name" value="RibuloseP-bd_barrel"/>
</dbReference>
<dbReference type="NCBIfam" id="TIGR00735">
    <property type="entry name" value="hisF"/>
    <property type="match status" value="1"/>
</dbReference>
<dbReference type="PANTHER" id="PTHR21235:SF2">
    <property type="entry name" value="IMIDAZOLE GLYCEROL PHOSPHATE SYNTHASE HISHF"/>
    <property type="match status" value="1"/>
</dbReference>
<dbReference type="PANTHER" id="PTHR21235">
    <property type="entry name" value="IMIDAZOLE GLYCEROL PHOSPHATE SYNTHASE SUBUNIT HISF/H IGP SYNTHASE SUBUNIT HISF/H"/>
    <property type="match status" value="1"/>
</dbReference>
<dbReference type="Pfam" id="PF00977">
    <property type="entry name" value="His_biosynth"/>
    <property type="match status" value="1"/>
</dbReference>
<dbReference type="SUPFAM" id="SSF51366">
    <property type="entry name" value="Ribulose-phoshate binding barrel"/>
    <property type="match status" value="1"/>
</dbReference>
<feature type="chain" id="PRO_0000142172" description="Imidazole glycerol phosphate synthase subunit HisF">
    <location>
        <begin position="1"/>
        <end position="254"/>
    </location>
</feature>
<feature type="active site" evidence="1">
    <location>
        <position position="12"/>
    </location>
</feature>
<feature type="active site" evidence="1">
    <location>
        <position position="131"/>
    </location>
</feature>
<gene>
    <name evidence="1" type="primary">hisF</name>
    <name type="ordered locus">Lxx11230</name>
</gene>
<evidence type="ECO:0000255" key="1">
    <source>
        <dbReference type="HAMAP-Rule" id="MF_01013"/>
    </source>
</evidence>
<keyword id="KW-0028">Amino-acid biosynthesis</keyword>
<keyword id="KW-0963">Cytoplasm</keyword>
<keyword id="KW-0368">Histidine biosynthesis</keyword>
<keyword id="KW-0456">Lyase</keyword>
<keyword id="KW-1185">Reference proteome</keyword>
<name>HIS6_LEIXX</name>
<sequence length="254" mass="26107">MGVAVRVIPCLDVAAGRVVKGVNFQNLRDQGDPVEFARRYAEQGADELTFLDVTATVDDRSTTYDVVRATAGQVFIPLTVGGGVRSTEDVARLLGSGADKVGVNSAAIARPGLVAEIADRFGAQVLVLSLDVKRSASTDSGFAVTTHGGRTETGLDALEWAARAIELGAGELLVNSIDADGTKEGFDLELIREMRALSAVPVIASGGAGKTADFAPALRAGADAVLAASVFHSGELTIGDVKTALAAAGMEVRP</sequence>
<proteinExistence type="inferred from homology"/>
<comment type="function">
    <text evidence="1">IGPS catalyzes the conversion of PRFAR and glutamine to IGP, AICAR and glutamate. The HisF subunit catalyzes the cyclization activity that produces IGP and AICAR from PRFAR using the ammonia provided by the HisH subunit.</text>
</comment>
<comment type="catalytic activity">
    <reaction evidence="1">
        <text>5-[(5-phospho-1-deoxy-D-ribulos-1-ylimino)methylamino]-1-(5-phospho-beta-D-ribosyl)imidazole-4-carboxamide + L-glutamine = D-erythro-1-(imidazol-4-yl)glycerol 3-phosphate + 5-amino-1-(5-phospho-beta-D-ribosyl)imidazole-4-carboxamide + L-glutamate + H(+)</text>
        <dbReference type="Rhea" id="RHEA:24793"/>
        <dbReference type="ChEBI" id="CHEBI:15378"/>
        <dbReference type="ChEBI" id="CHEBI:29985"/>
        <dbReference type="ChEBI" id="CHEBI:58278"/>
        <dbReference type="ChEBI" id="CHEBI:58359"/>
        <dbReference type="ChEBI" id="CHEBI:58475"/>
        <dbReference type="ChEBI" id="CHEBI:58525"/>
        <dbReference type="EC" id="4.3.2.10"/>
    </reaction>
</comment>
<comment type="pathway">
    <text evidence="1">Amino-acid biosynthesis; L-histidine biosynthesis; L-histidine from 5-phospho-alpha-D-ribose 1-diphosphate: step 5/9.</text>
</comment>
<comment type="subunit">
    <text evidence="1">Heterodimer of HisH and HisF.</text>
</comment>
<comment type="subcellular location">
    <subcellularLocation>
        <location evidence="1">Cytoplasm</location>
    </subcellularLocation>
</comment>
<comment type="similarity">
    <text evidence="1">Belongs to the HisA/HisF family.</text>
</comment>